<name>RL23_RICPU</name>
<proteinExistence type="inferred from homology"/>
<protein>
    <recommendedName>
        <fullName evidence="1">Large ribosomal subunit protein uL23</fullName>
    </recommendedName>
    <alternativeName>
        <fullName evidence="2">50S ribosomal protein L23</fullName>
    </alternativeName>
</protein>
<keyword id="KW-0687">Ribonucleoprotein</keyword>
<keyword id="KW-0689">Ribosomal protein</keyword>
<keyword id="KW-0694">RNA-binding</keyword>
<keyword id="KW-0699">rRNA-binding</keyword>
<dbReference type="EMBL" id="CP001227">
    <property type="protein sequence ID" value="ACR47774.1"/>
    <property type="molecule type" value="Genomic_DNA"/>
</dbReference>
<dbReference type="RefSeq" id="WP_012736945.1">
    <property type="nucleotide sequence ID" value="NC_012730.1"/>
</dbReference>
<dbReference type="SMR" id="C4K2H7"/>
<dbReference type="KEGG" id="rpk:RPR_06220"/>
<dbReference type="HOGENOM" id="CLU_037562_3_2_5"/>
<dbReference type="Proteomes" id="UP000005015">
    <property type="component" value="Chromosome"/>
</dbReference>
<dbReference type="GO" id="GO:1990904">
    <property type="term" value="C:ribonucleoprotein complex"/>
    <property type="evidence" value="ECO:0007669"/>
    <property type="project" value="UniProtKB-KW"/>
</dbReference>
<dbReference type="GO" id="GO:0005840">
    <property type="term" value="C:ribosome"/>
    <property type="evidence" value="ECO:0007669"/>
    <property type="project" value="UniProtKB-KW"/>
</dbReference>
<dbReference type="GO" id="GO:0019843">
    <property type="term" value="F:rRNA binding"/>
    <property type="evidence" value="ECO:0007669"/>
    <property type="project" value="UniProtKB-UniRule"/>
</dbReference>
<dbReference type="GO" id="GO:0003735">
    <property type="term" value="F:structural constituent of ribosome"/>
    <property type="evidence" value="ECO:0007669"/>
    <property type="project" value="InterPro"/>
</dbReference>
<dbReference type="GO" id="GO:0006412">
    <property type="term" value="P:translation"/>
    <property type="evidence" value="ECO:0007669"/>
    <property type="project" value="UniProtKB-UniRule"/>
</dbReference>
<dbReference type="FunFam" id="3.30.70.330:FF:000001">
    <property type="entry name" value="50S ribosomal protein L23"/>
    <property type="match status" value="1"/>
</dbReference>
<dbReference type="Gene3D" id="3.30.70.330">
    <property type="match status" value="1"/>
</dbReference>
<dbReference type="HAMAP" id="MF_01369_B">
    <property type="entry name" value="Ribosomal_uL23_B"/>
    <property type="match status" value="1"/>
</dbReference>
<dbReference type="InterPro" id="IPR012677">
    <property type="entry name" value="Nucleotide-bd_a/b_plait_sf"/>
</dbReference>
<dbReference type="InterPro" id="IPR013025">
    <property type="entry name" value="Ribosomal_uL23-like"/>
</dbReference>
<dbReference type="InterPro" id="IPR012678">
    <property type="entry name" value="Ribosomal_uL23/eL15/eS24_sf"/>
</dbReference>
<dbReference type="NCBIfam" id="NF004359">
    <property type="entry name" value="PRK05738.1-3"/>
    <property type="match status" value="1"/>
</dbReference>
<dbReference type="NCBIfam" id="NF004363">
    <property type="entry name" value="PRK05738.2-4"/>
    <property type="match status" value="1"/>
</dbReference>
<dbReference type="PANTHER" id="PTHR11620">
    <property type="entry name" value="60S RIBOSOMAL PROTEIN L23A"/>
    <property type="match status" value="1"/>
</dbReference>
<dbReference type="Pfam" id="PF00276">
    <property type="entry name" value="Ribosomal_L23"/>
    <property type="match status" value="1"/>
</dbReference>
<dbReference type="SUPFAM" id="SSF54189">
    <property type="entry name" value="Ribosomal proteins S24e, L23 and L15e"/>
    <property type="match status" value="1"/>
</dbReference>
<evidence type="ECO:0000255" key="1">
    <source>
        <dbReference type="HAMAP-Rule" id="MF_01369"/>
    </source>
</evidence>
<evidence type="ECO:0000305" key="2"/>
<feature type="chain" id="PRO_1000215044" description="Large ribosomal subunit protein uL23">
    <location>
        <begin position="1"/>
        <end position="98"/>
    </location>
</feature>
<accession>C4K2H7</accession>
<organism>
    <name type="scientific">Rickettsia peacockii (strain Rustic)</name>
    <dbReference type="NCBI Taxonomy" id="562019"/>
    <lineage>
        <taxon>Bacteria</taxon>
        <taxon>Pseudomonadati</taxon>
        <taxon>Pseudomonadota</taxon>
        <taxon>Alphaproteobacteria</taxon>
        <taxon>Rickettsiales</taxon>
        <taxon>Rickettsiaceae</taxon>
        <taxon>Rickettsieae</taxon>
        <taxon>Rickettsia</taxon>
        <taxon>spotted fever group</taxon>
    </lineage>
</organism>
<comment type="function">
    <text evidence="1">One of the early assembly proteins it binds 23S rRNA. One of the proteins that surrounds the polypeptide exit tunnel on the outside of the ribosome. Forms the main docking site for trigger factor binding to the ribosome.</text>
</comment>
<comment type="subunit">
    <text evidence="1">Part of the 50S ribosomal subunit. Contacts protein L29, and trigger factor when it is bound to the ribosome.</text>
</comment>
<comment type="similarity">
    <text evidence="1">Belongs to the universal ribosomal protein uL23 family.</text>
</comment>
<sequence>MSSYKYYDLIRKPIITEKTTTLSEQNKYAFYVDKFAEKLTIKKAIEEIFKVKVKKVNILNVKGKKKRFKGIIGTQINRKKAIVTLEKDHNIDFAGGIK</sequence>
<reference key="1">
    <citation type="journal article" date="2009" name="PLoS ONE">
        <title>Genome sequence of the endosymbiont Rickettsia peacockii and comparison with virulent Rickettsia rickettsii: identification of virulence factors.</title>
        <authorList>
            <person name="Felsheim R.F."/>
            <person name="Kurtti T.J."/>
            <person name="Munderloh U.G."/>
        </authorList>
    </citation>
    <scope>NUCLEOTIDE SEQUENCE [LARGE SCALE GENOMIC DNA]</scope>
    <source>
        <strain>Rustic</strain>
    </source>
</reference>
<gene>
    <name evidence="1" type="primary">rplW</name>
    <name type="ordered locus">RPR_06220</name>
</gene>